<feature type="chain" id="PRO_0000110830" description="Aspartate--tRNA ligase">
    <location>
        <begin position="1"/>
        <end position="587"/>
    </location>
</feature>
<feature type="region of interest" description="Aspartate" evidence="1">
    <location>
        <begin position="197"/>
        <end position="200"/>
    </location>
</feature>
<feature type="binding site" evidence="1">
    <location>
        <position position="173"/>
    </location>
    <ligand>
        <name>L-aspartate</name>
        <dbReference type="ChEBI" id="CHEBI:29991"/>
    </ligand>
</feature>
<feature type="binding site" evidence="1">
    <location>
        <begin position="219"/>
        <end position="221"/>
    </location>
    <ligand>
        <name>ATP</name>
        <dbReference type="ChEBI" id="CHEBI:30616"/>
    </ligand>
</feature>
<feature type="binding site" evidence="1">
    <location>
        <position position="219"/>
    </location>
    <ligand>
        <name>L-aspartate</name>
        <dbReference type="ChEBI" id="CHEBI:29991"/>
    </ligand>
</feature>
<feature type="binding site" evidence="1">
    <location>
        <position position="228"/>
    </location>
    <ligand>
        <name>ATP</name>
        <dbReference type="ChEBI" id="CHEBI:30616"/>
    </ligand>
</feature>
<feature type="binding site" evidence="1">
    <location>
        <position position="446"/>
    </location>
    <ligand>
        <name>L-aspartate</name>
        <dbReference type="ChEBI" id="CHEBI:29991"/>
    </ligand>
</feature>
<feature type="binding site" evidence="1">
    <location>
        <position position="480"/>
    </location>
    <ligand>
        <name>ATP</name>
        <dbReference type="ChEBI" id="CHEBI:30616"/>
    </ligand>
</feature>
<feature type="binding site" evidence="1">
    <location>
        <position position="487"/>
    </location>
    <ligand>
        <name>L-aspartate</name>
        <dbReference type="ChEBI" id="CHEBI:29991"/>
    </ligand>
</feature>
<feature type="binding site" evidence="1">
    <location>
        <begin position="532"/>
        <end position="535"/>
    </location>
    <ligand>
        <name>ATP</name>
        <dbReference type="ChEBI" id="CHEBI:30616"/>
    </ligand>
</feature>
<accession>Q8A9E3</accession>
<reference key="1">
    <citation type="journal article" date="2003" name="Science">
        <title>A genomic view of the human-Bacteroides thetaiotaomicron symbiosis.</title>
        <authorList>
            <person name="Xu J."/>
            <person name="Bjursell M.K."/>
            <person name="Himrod J."/>
            <person name="Deng S."/>
            <person name="Carmichael L.K."/>
            <person name="Chiang H.C."/>
            <person name="Hooper L.V."/>
            <person name="Gordon J.I."/>
        </authorList>
    </citation>
    <scope>NUCLEOTIDE SEQUENCE [LARGE SCALE GENOMIC DNA]</scope>
    <source>
        <strain>ATCC 29148 / DSM 2079 / JCM 5827 / CCUG 10774 / NCTC 10582 / VPI-5482 / E50</strain>
    </source>
</reference>
<keyword id="KW-0030">Aminoacyl-tRNA synthetase</keyword>
<keyword id="KW-0067">ATP-binding</keyword>
<keyword id="KW-0963">Cytoplasm</keyword>
<keyword id="KW-0436">Ligase</keyword>
<keyword id="KW-0547">Nucleotide-binding</keyword>
<keyword id="KW-0648">Protein biosynthesis</keyword>
<keyword id="KW-1185">Reference proteome</keyword>
<comment type="function">
    <text evidence="1">Catalyzes the attachment of L-aspartate to tRNA(Asp) in a two-step reaction: L-aspartate is first activated by ATP to form Asp-AMP and then transferred to the acceptor end of tRNA(Asp).</text>
</comment>
<comment type="catalytic activity">
    <reaction evidence="1">
        <text>tRNA(Asp) + L-aspartate + ATP = L-aspartyl-tRNA(Asp) + AMP + diphosphate</text>
        <dbReference type="Rhea" id="RHEA:19649"/>
        <dbReference type="Rhea" id="RHEA-COMP:9660"/>
        <dbReference type="Rhea" id="RHEA-COMP:9678"/>
        <dbReference type="ChEBI" id="CHEBI:29991"/>
        <dbReference type="ChEBI" id="CHEBI:30616"/>
        <dbReference type="ChEBI" id="CHEBI:33019"/>
        <dbReference type="ChEBI" id="CHEBI:78442"/>
        <dbReference type="ChEBI" id="CHEBI:78516"/>
        <dbReference type="ChEBI" id="CHEBI:456215"/>
        <dbReference type="EC" id="6.1.1.12"/>
    </reaction>
</comment>
<comment type="subunit">
    <text evidence="1">Homodimer.</text>
</comment>
<comment type="subcellular location">
    <subcellularLocation>
        <location evidence="1">Cytoplasm</location>
    </subcellularLocation>
</comment>
<comment type="similarity">
    <text evidence="1">Belongs to the class-II aminoacyl-tRNA synthetase family. Type 1 subfamily.</text>
</comment>
<sequence length="587" mass="66563">MFRTHTCGELRISDVNKQITLSGWVQRSRKMGGMTFIDLRDRYGITQLVFNEEINAELCDRANKLGREFVIQITGTVNERFSKNANIPTGDIEIIVSELNVLNTAMTPPFTIEDNTDGGDDIRMKYRYLDLRRNAVRSNLELRHKMTIEVRKYLDSLGFIEVETPVLIGSTPEGARDFVVPSRMNPGQFYALPQSPQTLKQLLMVSGFDRYFQIAKCFRDEDLRADRQPEFTQIDCEMSFVEQEDIISTFEGMAKHLFKTLRGVELTEPFQRMPWADAMKYYGSDKPDLRFGMKFVELMDIMKGHGFSVFDNAAYVGGICAEGAATYTRKQLDALTEFVKKPQIGAKGMVYARVEADGTVKSSVDKFYTQEVLQQMKEAFGAKPGDLILILSGDDVMKTRKQLCELRLEMGSQLGLRDKNKFVCLWVIDFPMFEWSEEEGRLMAMHHPFTHPKEEDIPLLDTDPAAVRADAYDMVVNGVEVGGGSIRIHDAQLQARMFEILGFTPEKAQAQFGFLMNAFKYGAPPHGGLAYGLDRWVSLFAGLDSIRDCIAFPKNNSGRDVMLDAPSEIDQTQLDELNLIVDIKENK</sequence>
<name>SYD_BACTN</name>
<organism>
    <name type="scientific">Bacteroides thetaiotaomicron (strain ATCC 29148 / DSM 2079 / JCM 5827 / CCUG 10774 / NCTC 10582 / VPI-5482 / E50)</name>
    <dbReference type="NCBI Taxonomy" id="226186"/>
    <lineage>
        <taxon>Bacteria</taxon>
        <taxon>Pseudomonadati</taxon>
        <taxon>Bacteroidota</taxon>
        <taxon>Bacteroidia</taxon>
        <taxon>Bacteroidales</taxon>
        <taxon>Bacteroidaceae</taxon>
        <taxon>Bacteroides</taxon>
    </lineage>
</organism>
<dbReference type="EC" id="6.1.1.12" evidence="1"/>
<dbReference type="EMBL" id="AE015928">
    <property type="protein sequence ID" value="AAO75979.1"/>
    <property type="molecule type" value="Genomic_DNA"/>
</dbReference>
<dbReference type="RefSeq" id="NP_809785.1">
    <property type="nucleotide sequence ID" value="NC_004663.1"/>
</dbReference>
<dbReference type="RefSeq" id="WP_008765710.1">
    <property type="nucleotide sequence ID" value="NZ_UYXG01000019.1"/>
</dbReference>
<dbReference type="SMR" id="Q8A9E3"/>
<dbReference type="FunCoup" id="Q8A9E3">
    <property type="interactions" value="562"/>
</dbReference>
<dbReference type="STRING" id="226186.BT_0872"/>
<dbReference type="PaxDb" id="226186-BT_0872"/>
<dbReference type="EnsemblBacteria" id="AAO75979">
    <property type="protein sequence ID" value="AAO75979"/>
    <property type="gene ID" value="BT_0872"/>
</dbReference>
<dbReference type="GeneID" id="60926842"/>
<dbReference type="KEGG" id="bth:BT_0872"/>
<dbReference type="PATRIC" id="fig|226186.12.peg.884"/>
<dbReference type="eggNOG" id="COG0173">
    <property type="taxonomic scope" value="Bacteria"/>
</dbReference>
<dbReference type="HOGENOM" id="CLU_014330_3_2_10"/>
<dbReference type="InParanoid" id="Q8A9E3"/>
<dbReference type="OrthoDB" id="9802326at2"/>
<dbReference type="Proteomes" id="UP000001414">
    <property type="component" value="Chromosome"/>
</dbReference>
<dbReference type="GO" id="GO:0005737">
    <property type="term" value="C:cytoplasm"/>
    <property type="evidence" value="ECO:0007669"/>
    <property type="project" value="UniProtKB-SubCell"/>
</dbReference>
<dbReference type="GO" id="GO:0004815">
    <property type="term" value="F:aspartate-tRNA ligase activity"/>
    <property type="evidence" value="ECO:0000318"/>
    <property type="project" value="GO_Central"/>
</dbReference>
<dbReference type="GO" id="GO:0005524">
    <property type="term" value="F:ATP binding"/>
    <property type="evidence" value="ECO:0007669"/>
    <property type="project" value="UniProtKB-UniRule"/>
</dbReference>
<dbReference type="GO" id="GO:0003676">
    <property type="term" value="F:nucleic acid binding"/>
    <property type="evidence" value="ECO:0007669"/>
    <property type="project" value="InterPro"/>
</dbReference>
<dbReference type="GO" id="GO:0006422">
    <property type="term" value="P:aspartyl-tRNA aminoacylation"/>
    <property type="evidence" value="ECO:0000318"/>
    <property type="project" value="GO_Central"/>
</dbReference>
<dbReference type="CDD" id="cd00777">
    <property type="entry name" value="AspRS_core"/>
    <property type="match status" value="1"/>
</dbReference>
<dbReference type="CDD" id="cd04317">
    <property type="entry name" value="EcAspRS_like_N"/>
    <property type="match status" value="1"/>
</dbReference>
<dbReference type="Gene3D" id="3.30.930.10">
    <property type="entry name" value="Bira Bifunctional Protein, Domain 2"/>
    <property type="match status" value="1"/>
</dbReference>
<dbReference type="Gene3D" id="3.30.1360.30">
    <property type="entry name" value="GAD-like domain"/>
    <property type="match status" value="1"/>
</dbReference>
<dbReference type="Gene3D" id="2.40.50.140">
    <property type="entry name" value="Nucleic acid-binding proteins"/>
    <property type="match status" value="1"/>
</dbReference>
<dbReference type="HAMAP" id="MF_00044">
    <property type="entry name" value="Asp_tRNA_synth_type1"/>
    <property type="match status" value="1"/>
</dbReference>
<dbReference type="InterPro" id="IPR004364">
    <property type="entry name" value="Aa-tRNA-synt_II"/>
</dbReference>
<dbReference type="InterPro" id="IPR006195">
    <property type="entry name" value="aa-tRNA-synth_II"/>
</dbReference>
<dbReference type="InterPro" id="IPR045864">
    <property type="entry name" value="aa-tRNA-synth_II/BPL/LPL"/>
</dbReference>
<dbReference type="InterPro" id="IPR004524">
    <property type="entry name" value="Asp-tRNA-ligase_1"/>
</dbReference>
<dbReference type="InterPro" id="IPR047089">
    <property type="entry name" value="Asp-tRNA-ligase_1_N"/>
</dbReference>
<dbReference type="InterPro" id="IPR002312">
    <property type="entry name" value="Asp/Asn-tRNA-synth_IIb"/>
</dbReference>
<dbReference type="InterPro" id="IPR047090">
    <property type="entry name" value="AspRS_core"/>
</dbReference>
<dbReference type="InterPro" id="IPR004115">
    <property type="entry name" value="GAD-like_sf"/>
</dbReference>
<dbReference type="InterPro" id="IPR029351">
    <property type="entry name" value="GAD_dom"/>
</dbReference>
<dbReference type="InterPro" id="IPR012340">
    <property type="entry name" value="NA-bd_OB-fold"/>
</dbReference>
<dbReference type="InterPro" id="IPR004365">
    <property type="entry name" value="NA-bd_OB_tRNA"/>
</dbReference>
<dbReference type="NCBIfam" id="TIGR00459">
    <property type="entry name" value="aspS_bact"/>
    <property type="match status" value="1"/>
</dbReference>
<dbReference type="NCBIfam" id="NF001750">
    <property type="entry name" value="PRK00476.1"/>
    <property type="match status" value="1"/>
</dbReference>
<dbReference type="PANTHER" id="PTHR22594:SF5">
    <property type="entry name" value="ASPARTATE--TRNA LIGASE, MITOCHONDRIAL"/>
    <property type="match status" value="1"/>
</dbReference>
<dbReference type="PANTHER" id="PTHR22594">
    <property type="entry name" value="ASPARTYL/LYSYL-TRNA SYNTHETASE"/>
    <property type="match status" value="1"/>
</dbReference>
<dbReference type="Pfam" id="PF02938">
    <property type="entry name" value="GAD"/>
    <property type="match status" value="1"/>
</dbReference>
<dbReference type="Pfam" id="PF00152">
    <property type="entry name" value="tRNA-synt_2"/>
    <property type="match status" value="1"/>
</dbReference>
<dbReference type="Pfam" id="PF01336">
    <property type="entry name" value="tRNA_anti-codon"/>
    <property type="match status" value="1"/>
</dbReference>
<dbReference type="PRINTS" id="PR01042">
    <property type="entry name" value="TRNASYNTHASP"/>
</dbReference>
<dbReference type="SUPFAM" id="SSF55681">
    <property type="entry name" value="Class II aaRS and biotin synthetases"/>
    <property type="match status" value="1"/>
</dbReference>
<dbReference type="SUPFAM" id="SSF55261">
    <property type="entry name" value="GAD domain-like"/>
    <property type="match status" value="1"/>
</dbReference>
<dbReference type="SUPFAM" id="SSF50249">
    <property type="entry name" value="Nucleic acid-binding proteins"/>
    <property type="match status" value="1"/>
</dbReference>
<dbReference type="PROSITE" id="PS50862">
    <property type="entry name" value="AA_TRNA_LIGASE_II"/>
    <property type="match status" value="1"/>
</dbReference>
<protein>
    <recommendedName>
        <fullName evidence="1">Aspartate--tRNA ligase</fullName>
        <ecNumber evidence="1">6.1.1.12</ecNumber>
    </recommendedName>
    <alternativeName>
        <fullName evidence="1">Aspartyl-tRNA synthetase</fullName>
        <shortName evidence="1">AspRS</shortName>
    </alternativeName>
</protein>
<proteinExistence type="inferred from homology"/>
<evidence type="ECO:0000255" key="1">
    <source>
        <dbReference type="HAMAP-Rule" id="MF_00044"/>
    </source>
</evidence>
<gene>
    <name evidence="1" type="primary">aspS</name>
    <name type="ordered locus">BT_0872</name>
</gene>